<dbReference type="EMBL" id="U88189">
    <property type="protein sequence ID" value="AAC61892.1"/>
    <property type="molecule type" value="Genomic_DNA"/>
</dbReference>
<dbReference type="SMR" id="O87906"/>
<dbReference type="GO" id="GO:0005102">
    <property type="term" value="F:signaling receptor binding"/>
    <property type="evidence" value="ECO:0007669"/>
    <property type="project" value="InterPro"/>
</dbReference>
<dbReference type="GO" id="GO:0090729">
    <property type="term" value="F:toxin activity"/>
    <property type="evidence" value="ECO:0007669"/>
    <property type="project" value="UniProtKB-KW"/>
</dbReference>
<dbReference type="GO" id="GO:0030435">
    <property type="term" value="P:sporulation resulting in formation of a cellular spore"/>
    <property type="evidence" value="ECO:0007669"/>
    <property type="project" value="UniProtKB-KW"/>
</dbReference>
<dbReference type="GO" id="GO:0001907">
    <property type="term" value="P:symbiont-mediated killing of host cell"/>
    <property type="evidence" value="ECO:0007669"/>
    <property type="project" value="InterPro"/>
</dbReference>
<dbReference type="CDD" id="cd04085">
    <property type="entry name" value="delta_endotoxin_C"/>
    <property type="match status" value="1"/>
</dbReference>
<dbReference type="Gene3D" id="2.60.120.260">
    <property type="entry name" value="Galactose-binding domain-like"/>
    <property type="match status" value="1"/>
</dbReference>
<dbReference type="Gene3D" id="2.100.10.10">
    <property type="entry name" value="Pesticidal crystal protein, central domain"/>
    <property type="match status" value="1"/>
</dbReference>
<dbReference type="Gene3D" id="1.20.190.10">
    <property type="entry name" value="Pesticidal crystal protein, N-terminal domain"/>
    <property type="match status" value="1"/>
</dbReference>
<dbReference type="InterPro" id="IPR008979">
    <property type="entry name" value="Galactose-bd-like_sf"/>
</dbReference>
<dbReference type="InterPro" id="IPR038979">
    <property type="entry name" value="Pest_crys"/>
</dbReference>
<dbReference type="InterPro" id="IPR005638">
    <property type="entry name" value="Pest_crys_dom-III"/>
</dbReference>
<dbReference type="InterPro" id="IPR005639">
    <property type="entry name" value="Pest_crys_dom_I"/>
</dbReference>
<dbReference type="InterPro" id="IPR036716">
    <property type="entry name" value="Pest_crys_N_sf"/>
</dbReference>
<dbReference type="InterPro" id="IPR036399">
    <property type="entry name" value="Pest_cryst_cen_dom_sf"/>
</dbReference>
<dbReference type="InterPro" id="IPR001178">
    <property type="entry name" value="Pest_cryst_dom_II"/>
</dbReference>
<dbReference type="PANTHER" id="PTHR37003">
    <property type="entry name" value="ENDOTOXIN_N DOMAIN-CONTAINING PROTEIN-RELATED"/>
    <property type="match status" value="1"/>
</dbReference>
<dbReference type="PANTHER" id="PTHR37003:SF2">
    <property type="entry name" value="PESTICIDAL CRYSTAL PROTEIN N-TERMINAL DOMAIN-CONTAINING PROTEIN"/>
    <property type="match status" value="1"/>
</dbReference>
<dbReference type="Pfam" id="PF03944">
    <property type="entry name" value="Endotoxin_C"/>
    <property type="match status" value="1"/>
</dbReference>
<dbReference type="Pfam" id="PF00555">
    <property type="entry name" value="Endotoxin_M"/>
    <property type="match status" value="1"/>
</dbReference>
<dbReference type="Pfam" id="PF03945">
    <property type="entry name" value="Endotoxin_N"/>
    <property type="match status" value="1"/>
</dbReference>
<dbReference type="SUPFAM" id="SSF51096">
    <property type="entry name" value="delta-Endotoxin (insectocide), middle domain"/>
    <property type="match status" value="1"/>
</dbReference>
<dbReference type="SUPFAM" id="SSF56849">
    <property type="entry name" value="delta-Endotoxin (insectocide), N-terminal domain"/>
    <property type="match status" value="1"/>
</dbReference>
<dbReference type="SUPFAM" id="SSF49785">
    <property type="entry name" value="Galactose-binding domain-like"/>
    <property type="match status" value="1"/>
</dbReference>
<gene>
    <name type="primary">cry25Aa</name>
    <name type="synonym">cryXXVA(a)</name>
</gene>
<reference key="1">
    <citation type="submission" date="1997-01" db="EMBL/GenBank/DDBJ databases">
        <title>Isolation and characterization of insecticidal genes from Bacillus thuringiensis subsp. jegathesan.</title>
        <authorList>
            <person name="Kawalek M.D."/>
            <person name="Gill S.S."/>
        </authorList>
    </citation>
    <scope>NUCLEOTIDE SEQUENCE [GENOMIC DNA]</scope>
</reference>
<sequence>MNPYQNKSECEILNAPLNNINMPNRYPFANDPNAVMKNGNYKDWLNECDGITPSIFGTLGVLASIVISTINLATSPSIGDAFALVSSIGEYWPETKTSFPLSVADVNRLIREALDQNAINRATGKFNGLMDTYNTVYLKNLQDWYDTRIPANPQGDSQLREAARRSLEEIERDFRKALAGEFAEAGSQIVLLPIYAQAANIHLLILKDAMQFRTDLGLIRPVGVPITTSAEDPFESEFLLRIKKYTDHCISYYDDGLAKIRSRGSDGETWWEFNKFRREMTLTVLDLVALYPTHNIKLYPIPTQTELSRVVYTDPVGCFGNRKSDIFSRLNFDYLENRLTRPREPFNYLNSVQLFASTVSNSNNGEVLRGNLNKIMFEGGWTASRSGDGVTTGTPFSTMDWSYGWGYPRKHYAEITSRSQALPGLNNSIHVIVGIDSFRAIGPGGQGDHTFSLPGGDMYDCGKVQINPLEDYRNSDHWISDMMTINQSVQLASNPTQTFAFSALSLGWHHSSAGNRNVYVYDKITQIPATKTVREHPMIKGPGFTGGDLADLSSNSDILQYDLRSDYDDRLTEDVPFRIRIRCASIGVSTISVDNWGSSSPQVTVASTAASLDTLKYESFQYVSIPGNYYFDSAPRIRLLRQPGRLLVDRIEIIPVNFFPLSEQENKSVDSLFIN</sequence>
<keyword id="KW-0749">Sporulation</keyword>
<keyword id="KW-0800">Toxin</keyword>
<keyword id="KW-0843">Virulence</keyword>
<protein>
    <recommendedName>
        <fullName>Pesticidal crystal protein Cry25Aa</fullName>
    </recommendedName>
    <alternativeName>
        <fullName>76 kDa crystal protein</fullName>
    </alternativeName>
    <alternativeName>
        <fullName>Crystaline entomocidal protoxin</fullName>
    </alternativeName>
    <alternativeName>
        <fullName>Insecticidal delta-endotoxin CryXXVA(a)</fullName>
    </alternativeName>
    <alternativeName>
        <fullName>Insecticidal protein Jeg74</fullName>
    </alternativeName>
</protein>
<accession>O87906</accession>
<organism>
    <name type="scientific">Bacillus thuringiensis subsp. jegathesan</name>
    <dbReference type="NCBI Taxonomy" id="56955"/>
    <lineage>
        <taxon>Bacteria</taxon>
        <taxon>Bacillati</taxon>
        <taxon>Bacillota</taxon>
        <taxon>Bacilli</taxon>
        <taxon>Bacillales</taxon>
        <taxon>Bacillaceae</taxon>
        <taxon>Bacillus</taxon>
        <taxon>Bacillus cereus group</taxon>
    </lineage>
</organism>
<comment type="function">
    <text>Promotes colloidosmotic lysis by binding to the midgut epithelial cells of insects.</text>
</comment>
<comment type="developmental stage">
    <text>The crystal protein is produced during sporulation and is accumulated both as an inclusion and as part of the spore coat.</text>
</comment>
<comment type="miscellaneous">
    <text>Toxic segment of the protein is located in the N-terminus.</text>
</comment>
<comment type="similarity">
    <text evidence="1">Belongs to the delta endotoxin family.</text>
</comment>
<feature type="chain" id="PRO_0000174100" description="Pesticidal crystal protein Cry25Aa">
    <location>
        <begin position="1"/>
        <end position="675"/>
    </location>
</feature>
<proteinExistence type="evidence at transcript level"/>
<evidence type="ECO:0000305" key="1"/>
<name>C25AA_BACTJ</name>